<accession>A3NML2</accession>
<comment type="catalytic activity">
    <reaction evidence="1">
        <text>(S)-4-hydroxy-2-oxopentanoate = acetaldehyde + pyruvate</text>
        <dbReference type="Rhea" id="RHEA:22624"/>
        <dbReference type="ChEBI" id="CHEBI:15343"/>
        <dbReference type="ChEBI" id="CHEBI:15361"/>
        <dbReference type="ChEBI" id="CHEBI:73143"/>
        <dbReference type="EC" id="4.1.3.39"/>
    </reaction>
</comment>
<comment type="similarity">
    <text evidence="1">Belongs to the 4-hydroxy-2-oxovalerate aldolase family.</text>
</comment>
<reference key="1">
    <citation type="journal article" date="2010" name="Genome Biol. Evol.">
        <title>Continuing evolution of Burkholderia mallei through genome reduction and large-scale rearrangements.</title>
        <authorList>
            <person name="Losada L."/>
            <person name="Ronning C.M."/>
            <person name="DeShazer D."/>
            <person name="Woods D."/>
            <person name="Fedorova N."/>
            <person name="Kim H.S."/>
            <person name="Shabalina S.A."/>
            <person name="Pearson T.R."/>
            <person name="Brinkac L."/>
            <person name="Tan P."/>
            <person name="Nandi T."/>
            <person name="Crabtree J."/>
            <person name="Badger J."/>
            <person name="Beckstrom-Sternberg S."/>
            <person name="Saqib M."/>
            <person name="Schutzer S.E."/>
            <person name="Keim P."/>
            <person name="Nierman W.C."/>
        </authorList>
    </citation>
    <scope>NUCLEOTIDE SEQUENCE [LARGE SCALE GENOMIC DNA]</scope>
    <source>
        <strain>668</strain>
    </source>
</reference>
<feature type="chain" id="PRO_0000387802" description="4-hydroxy-2-oxovalerate aldolase">
    <location>
        <begin position="1"/>
        <end position="347"/>
    </location>
</feature>
<feature type="domain" description="Pyruvate carboxyltransferase" evidence="1">
    <location>
        <begin position="2"/>
        <end position="252"/>
    </location>
</feature>
<feature type="active site" description="Proton acceptor" evidence="1">
    <location>
        <position position="14"/>
    </location>
</feature>
<feature type="binding site" evidence="1">
    <location>
        <begin position="10"/>
        <end position="11"/>
    </location>
    <ligand>
        <name>substrate</name>
    </ligand>
</feature>
<feature type="binding site" evidence="1">
    <location>
        <position position="11"/>
    </location>
    <ligand>
        <name>Mn(2+)</name>
        <dbReference type="ChEBI" id="CHEBI:29035"/>
    </ligand>
</feature>
<feature type="binding site" evidence="1">
    <location>
        <position position="164"/>
    </location>
    <ligand>
        <name>substrate</name>
    </ligand>
</feature>
<feature type="binding site" evidence="1">
    <location>
        <position position="191"/>
    </location>
    <ligand>
        <name>Mn(2+)</name>
        <dbReference type="ChEBI" id="CHEBI:29035"/>
    </ligand>
</feature>
<feature type="binding site" evidence="1">
    <location>
        <position position="191"/>
    </location>
    <ligand>
        <name>substrate</name>
    </ligand>
</feature>
<feature type="binding site" evidence="1">
    <location>
        <position position="193"/>
    </location>
    <ligand>
        <name>Mn(2+)</name>
        <dbReference type="ChEBI" id="CHEBI:29035"/>
    </ligand>
</feature>
<feature type="site" description="Transition state stabilizer" evidence="1">
    <location>
        <position position="10"/>
    </location>
</feature>
<dbReference type="EC" id="4.1.3.39" evidence="1"/>
<dbReference type="EMBL" id="CP000571">
    <property type="protein sequence ID" value="ABN88041.1"/>
    <property type="molecule type" value="Genomic_DNA"/>
</dbReference>
<dbReference type="SMR" id="A3NML2"/>
<dbReference type="KEGG" id="bpd:BURPS668_A2590"/>
<dbReference type="HOGENOM" id="CLU_049173_0_0_4"/>
<dbReference type="GO" id="GO:0003852">
    <property type="term" value="F:2-isopropylmalate synthase activity"/>
    <property type="evidence" value="ECO:0007669"/>
    <property type="project" value="TreeGrafter"/>
</dbReference>
<dbReference type="GO" id="GO:0008701">
    <property type="term" value="F:4-hydroxy-2-oxovalerate aldolase activity"/>
    <property type="evidence" value="ECO:0007669"/>
    <property type="project" value="UniProtKB-UniRule"/>
</dbReference>
<dbReference type="GO" id="GO:0030145">
    <property type="term" value="F:manganese ion binding"/>
    <property type="evidence" value="ECO:0007669"/>
    <property type="project" value="UniProtKB-UniRule"/>
</dbReference>
<dbReference type="GO" id="GO:0009056">
    <property type="term" value="P:catabolic process"/>
    <property type="evidence" value="ECO:0007669"/>
    <property type="project" value="UniProtKB-KW"/>
</dbReference>
<dbReference type="GO" id="GO:0009098">
    <property type="term" value="P:L-leucine biosynthetic process"/>
    <property type="evidence" value="ECO:0007669"/>
    <property type="project" value="TreeGrafter"/>
</dbReference>
<dbReference type="CDD" id="cd07943">
    <property type="entry name" value="DRE_TIM_HOA"/>
    <property type="match status" value="1"/>
</dbReference>
<dbReference type="Gene3D" id="1.10.8.60">
    <property type="match status" value="1"/>
</dbReference>
<dbReference type="Gene3D" id="3.20.20.70">
    <property type="entry name" value="Aldolase class I"/>
    <property type="match status" value="1"/>
</dbReference>
<dbReference type="HAMAP" id="MF_01656">
    <property type="entry name" value="HOA"/>
    <property type="match status" value="1"/>
</dbReference>
<dbReference type="InterPro" id="IPR050073">
    <property type="entry name" value="2-IPM_HCS-like"/>
</dbReference>
<dbReference type="InterPro" id="IPR017629">
    <property type="entry name" value="4OH_2_O-val_aldolase"/>
</dbReference>
<dbReference type="InterPro" id="IPR013785">
    <property type="entry name" value="Aldolase_TIM"/>
</dbReference>
<dbReference type="InterPro" id="IPR012425">
    <property type="entry name" value="DmpG_comm"/>
</dbReference>
<dbReference type="InterPro" id="IPR035685">
    <property type="entry name" value="DRE_TIM_HOA"/>
</dbReference>
<dbReference type="InterPro" id="IPR000891">
    <property type="entry name" value="PYR_CT"/>
</dbReference>
<dbReference type="NCBIfam" id="TIGR03217">
    <property type="entry name" value="4OH_2_O_val_ald"/>
    <property type="match status" value="1"/>
</dbReference>
<dbReference type="NCBIfam" id="NF006049">
    <property type="entry name" value="PRK08195.1"/>
    <property type="match status" value="1"/>
</dbReference>
<dbReference type="PANTHER" id="PTHR10277:SF9">
    <property type="entry name" value="2-ISOPROPYLMALATE SYNTHASE 1, CHLOROPLASTIC-RELATED"/>
    <property type="match status" value="1"/>
</dbReference>
<dbReference type="PANTHER" id="PTHR10277">
    <property type="entry name" value="HOMOCITRATE SYNTHASE-RELATED"/>
    <property type="match status" value="1"/>
</dbReference>
<dbReference type="Pfam" id="PF07836">
    <property type="entry name" value="DmpG_comm"/>
    <property type="match status" value="1"/>
</dbReference>
<dbReference type="Pfam" id="PF00682">
    <property type="entry name" value="HMGL-like"/>
    <property type="match status" value="1"/>
</dbReference>
<dbReference type="SUPFAM" id="SSF51569">
    <property type="entry name" value="Aldolase"/>
    <property type="match status" value="1"/>
</dbReference>
<dbReference type="SUPFAM" id="SSF89000">
    <property type="entry name" value="post-HMGL domain-like"/>
    <property type="match status" value="1"/>
</dbReference>
<dbReference type="PROSITE" id="PS50991">
    <property type="entry name" value="PYR_CT"/>
    <property type="match status" value="1"/>
</dbReference>
<proteinExistence type="inferred from homology"/>
<name>HOA_BURP6</name>
<gene>
    <name type="primary">mhpE</name>
    <name type="ordered locus">BURPS668_A2590</name>
</gene>
<organism>
    <name type="scientific">Burkholderia pseudomallei (strain 668)</name>
    <dbReference type="NCBI Taxonomy" id="320373"/>
    <lineage>
        <taxon>Bacteria</taxon>
        <taxon>Pseudomonadati</taxon>
        <taxon>Pseudomonadota</taxon>
        <taxon>Betaproteobacteria</taxon>
        <taxon>Burkholderiales</taxon>
        <taxon>Burkholderiaceae</taxon>
        <taxon>Burkholderia</taxon>
        <taxon>pseudomallei group</taxon>
    </lineage>
</organism>
<protein>
    <recommendedName>
        <fullName evidence="1">4-hydroxy-2-oxovalerate aldolase</fullName>
        <shortName evidence="1">HOA</shortName>
        <ecNumber evidence="1">4.1.3.39</ecNumber>
    </recommendedName>
    <alternativeName>
        <fullName evidence="1">4-hydroxy-2-keto-pentanoic acid aldolase</fullName>
    </alternativeName>
    <alternativeName>
        <fullName evidence="1">4-hydroxy-2-oxopentanoate aldolase</fullName>
    </alternativeName>
</protein>
<keyword id="KW-0058">Aromatic hydrocarbons catabolism</keyword>
<keyword id="KW-0456">Lyase</keyword>
<keyword id="KW-0464">Manganese</keyword>
<keyword id="KW-0479">Metal-binding</keyword>
<sequence>MILISDATLRDGNHAIRHQLSAAQIHAYARAADEAGIDVVEVGHGNGLGGSSCLLGQTPIGDRLMLETARAALRTSRLGVHFIPGLGKAADISLALEIGVDVVRVATHCTEANVSARFIEQTRTAGRTAFGVLMMSHMAPPDTLLAQAKLMERYGAQAVVLMDSAGYSTPSLVRAKVERLVDGLDIDVGFHAHNNLGLAVANSLVALEAGARIVDACVKGFGAGAGNTQLETLVAAMEREGHDTRTTFERVMTLARGTETFLNPKTPHIQPANIASGLYGLFSGYVPHIQKAAQEFGVNEFELYKRLAERKLVAGQEDIIIEEASRLARERDVQRATGGVRVRELSA</sequence>
<evidence type="ECO:0000255" key="1">
    <source>
        <dbReference type="HAMAP-Rule" id="MF_01656"/>
    </source>
</evidence>